<gene>
    <name type="primary">SCPL3</name>
    <name type="ordered locus">At1g73280</name>
    <name type="ORF">T18K17.5</name>
</gene>
<feature type="signal peptide" evidence="2">
    <location>
        <begin position="1"/>
        <end position="30"/>
    </location>
</feature>
<feature type="chain" id="PRO_0000274617" description="Serine carboxypeptidase-like 3">
    <location>
        <begin position="31"/>
        <end position="441"/>
    </location>
</feature>
<feature type="active site" evidence="1">
    <location>
        <position position="184"/>
    </location>
</feature>
<feature type="active site" evidence="1">
    <location>
        <position position="366"/>
    </location>
</feature>
<feature type="active site" evidence="1">
    <location>
        <position position="419"/>
    </location>
</feature>
<feature type="glycosylation site" description="N-linked (GlcNAc...) asparagine" evidence="2">
    <location>
        <position position="109"/>
    </location>
</feature>
<feature type="glycosylation site" description="N-linked (GlcNAc...) asparagine" evidence="2">
    <location>
        <position position="350"/>
    </location>
</feature>
<feature type="glycosylation site" description="N-linked (GlcNAc...) asparagine" evidence="2">
    <location>
        <position position="382"/>
    </location>
</feature>
<feature type="disulfide bond" evidence="1">
    <location>
        <begin position="88"/>
        <end position="331"/>
    </location>
</feature>
<feature type="disulfide bond" evidence="1">
    <location>
        <begin position="252"/>
        <end position="266"/>
    </location>
</feature>
<feature type="disulfide bond" evidence="1">
    <location>
        <begin position="290"/>
        <end position="297"/>
    </location>
</feature>
<evidence type="ECO:0000250" key="1"/>
<evidence type="ECO:0000255" key="2"/>
<evidence type="ECO:0000269" key="3">
    <source>
    </source>
</evidence>
<evidence type="ECO:0000305" key="4"/>
<reference key="1">
    <citation type="journal article" date="2000" name="Nature">
        <title>Sequence and analysis of chromosome 1 of the plant Arabidopsis thaliana.</title>
        <authorList>
            <person name="Theologis A."/>
            <person name="Ecker J.R."/>
            <person name="Palm C.J."/>
            <person name="Federspiel N.A."/>
            <person name="Kaul S."/>
            <person name="White O."/>
            <person name="Alonso J."/>
            <person name="Altafi H."/>
            <person name="Araujo R."/>
            <person name="Bowman C.L."/>
            <person name="Brooks S.Y."/>
            <person name="Buehler E."/>
            <person name="Chan A."/>
            <person name="Chao Q."/>
            <person name="Chen H."/>
            <person name="Cheuk R.F."/>
            <person name="Chin C.W."/>
            <person name="Chung M.K."/>
            <person name="Conn L."/>
            <person name="Conway A.B."/>
            <person name="Conway A.R."/>
            <person name="Creasy T.H."/>
            <person name="Dewar K."/>
            <person name="Dunn P."/>
            <person name="Etgu P."/>
            <person name="Feldblyum T.V."/>
            <person name="Feng J.-D."/>
            <person name="Fong B."/>
            <person name="Fujii C.Y."/>
            <person name="Gill J.E."/>
            <person name="Goldsmith A.D."/>
            <person name="Haas B."/>
            <person name="Hansen N.F."/>
            <person name="Hughes B."/>
            <person name="Huizar L."/>
            <person name="Hunter J.L."/>
            <person name="Jenkins J."/>
            <person name="Johnson-Hopson C."/>
            <person name="Khan S."/>
            <person name="Khaykin E."/>
            <person name="Kim C.J."/>
            <person name="Koo H.L."/>
            <person name="Kremenetskaia I."/>
            <person name="Kurtz D.B."/>
            <person name="Kwan A."/>
            <person name="Lam B."/>
            <person name="Langin-Hooper S."/>
            <person name="Lee A."/>
            <person name="Lee J.M."/>
            <person name="Lenz C.A."/>
            <person name="Li J.H."/>
            <person name="Li Y.-P."/>
            <person name="Lin X."/>
            <person name="Liu S.X."/>
            <person name="Liu Z.A."/>
            <person name="Luros J.S."/>
            <person name="Maiti R."/>
            <person name="Marziali A."/>
            <person name="Militscher J."/>
            <person name="Miranda M."/>
            <person name="Nguyen M."/>
            <person name="Nierman W.C."/>
            <person name="Osborne B.I."/>
            <person name="Pai G."/>
            <person name="Peterson J."/>
            <person name="Pham P.K."/>
            <person name="Rizzo M."/>
            <person name="Rooney T."/>
            <person name="Rowley D."/>
            <person name="Sakano H."/>
            <person name="Salzberg S.L."/>
            <person name="Schwartz J.R."/>
            <person name="Shinn P."/>
            <person name="Southwick A.M."/>
            <person name="Sun H."/>
            <person name="Tallon L.J."/>
            <person name="Tambunga G."/>
            <person name="Toriumi M.J."/>
            <person name="Town C.D."/>
            <person name="Utterback T."/>
            <person name="Van Aken S."/>
            <person name="Vaysberg M."/>
            <person name="Vysotskaia V.S."/>
            <person name="Walker M."/>
            <person name="Wu D."/>
            <person name="Yu G."/>
            <person name="Fraser C.M."/>
            <person name="Venter J.C."/>
            <person name="Davis R.W."/>
        </authorList>
    </citation>
    <scope>NUCLEOTIDE SEQUENCE [LARGE SCALE GENOMIC DNA]</scope>
    <source>
        <strain>cv. Columbia</strain>
    </source>
</reference>
<reference key="2">
    <citation type="journal article" date="2017" name="Plant J.">
        <title>Araport11: a complete reannotation of the Arabidopsis thaliana reference genome.</title>
        <authorList>
            <person name="Cheng C.Y."/>
            <person name="Krishnakumar V."/>
            <person name="Chan A.P."/>
            <person name="Thibaud-Nissen F."/>
            <person name="Schobel S."/>
            <person name="Town C.D."/>
        </authorList>
    </citation>
    <scope>GENOME REANNOTATION</scope>
    <source>
        <strain>cv. Columbia</strain>
    </source>
</reference>
<reference key="3">
    <citation type="journal article" date="2005" name="Plant Physiol.">
        <title>An expression and bioinformatics analysis of the Arabidopsis serine carboxypeptidase-like gene family.</title>
        <authorList>
            <person name="Fraser C.M."/>
            <person name="Rider L.W."/>
            <person name="Chapple C."/>
        </authorList>
    </citation>
    <scope>GENE FAMILY</scope>
    <scope>TISSUE SPECIFICITY</scope>
    <scope>NOMENCLATURE</scope>
</reference>
<organism>
    <name type="scientific">Arabidopsis thaliana</name>
    <name type="common">Mouse-ear cress</name>
    <dbReference type="NCBI Taxonomy" id="3702"/>
    <lineage>
        <taxon>Eukaryota</taxon>
        <taxon>Viridiplantae</taxon>
        <taxon>Streptophyta</taxon>
        <taxon>Embryophyta</taxon>
        <taxon>Tracheophyta</taxon>
        <taxon>Spermatophyta</taxon>
        <taxon>Magnoliopsida</taxon>
        <taxon>eudicotyledons</taxon>
        <taxon>Gunneridae</taxon>
        <taxon>Pentapetalae</taxon>
        <taxon>rosids</taxon>
        <taxon>malvids</taxon>
        <taxon>Brassicales</taxon>
        <taxon>Brassicaceae</taxon>
        <taxon>Camelineae</taxon>
        <taxon>Arabidopsis</taxon>
    </lineage>
</organism>
<sequence>MASNYVFSVLRSLLLLIHTVFLGQHHVSSATIIKSLPGFEGPLPFELETGYIGVGEEEEVQLFYYFIKSERNPKEDPLLLWLSGGPGCSSISGLLFENGPLAMKLDVYNGTLPSLVSTTYSWTKASSMIFLDQPVGAGFSYSRTQLLNKPSDSGEAKRIHEFLQKWLGKHQEFSSNPFYVGGDSYSGMVVPATVQEISKGNYECCNPPINLQGYVLGNPLTDFVYDYNSRIPFAHGMALISDELFESLKKTCKGDYRNVHPRNTECLKFIEEFNKCTNSICQRRIIDPFCETETPNCYIYRFLLAAYWANDETVRKALQIKKETIGEWVRCHYGIPYNYDIKSSIPYHMNNSINGYRSLIYSGDHDFEVPFLGTQAWIRSLNYSVIDDWRPWMIKDQIAGYTRTYANKMTFATIRGGGHTIEFKPEEASIMFQRWIKGQPL</sequence>
<protein>
    <recommendedName>
        <fullName>Serine carboxypeptidase-like 3</fullName>
        <ecNumber>3.4.16.-</ecNumber>
    </recommendedName>
</protein>
<proteinExistence type="evidence at transcript level"/>
<dbReference type="EC" id="3.4.16.-"/>
<dbReference type="EMBL" id="AC010556">
    <property type="protein sequence ID" value="AAG52138.1"/>
    <property type="molecule type" value="Genomic_DNA"/>
</dbReference>
<dbReference type="EMBL" id="CP002684">
    <property type="protein sequence ID" value="AEE35437.1"/>
    <property type="molecule type" value="Genomic_DNA"/>
</dbReference>
<dbReference type="PIR" id="A96759">
    <property type="entry name" value="A96759"/>
</dbReference>
<dbReference type="RefSeq" id="NP_177471.1">
    <property type="nucleotide sequence ID" value="NM_105987.1"/>
</dbReference>
<dbReference type="SMR" id="Q9CAU1"/>
<dbReference type="FunCoup" id="Q9CAU1">
    <property type="interactions" value="1024"/>
</dbReference>
<dbReference type="STRING" id="3702.Q9CAU1"/>
<dbReference type="ESTHER" id="arath-SCP3">
    <property type="family name" value="Carboxypeptidase_S10"/>
</dbReference>
<dbReference type="MEROPS" id="S10.A05"/>
<dbReference type="GlyCosmos" id="Q9CAU1">
    <property type="glycosylation" value="3 sites, No reported glycans"/>
</dbReference>
<dbReference type="GlyGen" id="Q9CAU1">
    <property type="glycosylation" value="3 sites"/>
</dbReference>
<dbReference type="PaxDb" id="3702-AT1G73280.1"/>
<dbReference type="EnsemblPlants" id="AT1G73280.1">
    <property type="protein sequence ID" value="AT1G73280.1"/>
    <property type="gene ID" value="AT1G73280"/>
</dbReference>
<dbReference type="GeneID" id="843662"/>
<dbReference type="Gramene" id="AT1G73280.1">
    <property type="protein sequence ID" value="AT1G73280.1"/>
    <property type="gene ID" value="AT1G73280"/>
</dbReference>
<dbReference type="KEGG" id="ath:AT1G73280"/>
<dbReference type="Araport" id="AT1G73280"/>
<dbReference type="TAIR" id="AT1G73280">
    <property type="gene designation" value="SCPL3"/>
</dbReference>
<dbReference type="eggNOG" id="KOG1282">
    <property type="taxonomic scope" value="Eukaryota"/>
</dbReference>
<dbReference type="HOGENOM" id="CLU_008523_0_1_1"/>
<dbReference type="InParanoid" id="Q9CAU1"/>
<dbReference type="OMA" id="HYESNPF"/>
<dbReference type="PhylomeDB" id="Q9CAU1"/>
<dbReference type="BioCyc" id="ARA:AT1G73280-MONOMER"/>
<dbReference type="PRO" id="PR:Q9CAU1"/>
<dbReference type="Proteomes" id="UP000006548">
    <property type="component" value="Chromosome 1"/>
</dbReference>
<dbReference type="ExpressionAtlas" id="Q9CAU1">
    <property type="expression patterns" value="baseline and differential"/>
</dbReference>
<dbReference type="GO" id="GO:0005576">
    <property type="term" value="C:extracellular region"/>
    <property type="evidence" value="ECO:0007669"/>
    <property type="project" value="UniProtKB-SubCell"/>
</dbReference>
<dbReference type="GO" id="GO:0004185">
    <property type="term" value="F:serine-type carboxypeptidase activity"/>
    <property type="evidence" value="ECO:0007669"/>
    <property type="project" value="InterPro"/>
</dbReference>
<dbReference type="GO" id="GO:0006508">
    <property type="term" value="P:proteolysis"/>
    <property type="evidence" value="ECO:0007669"/>
    <property type="project" value="UniProtKB-KW"/>
</dbReference>
<dbReference type="FunFam" id="3.40.50.12670:FF:000001">
    <property type="entry name" value="Carboxypeptidase"/>
    <property type="match status" value="1"/>
</dbReference>
<dbReference type="FunFam" id="3.40.50.1820:FF:000148">
    <property type="entry name" value="Serine carboxypeptidase-like 11"/>
    <property type="match status" value="1"/>
</dbReference>
<dbReference type="Gene3D" id="3.40.50.1820">
    <property type="entry name" value="alpha/beta hydrolase"/>
    <property type="match status" value="1"/>
</dbReference>
<dbReference type="InterPro" id="IPR029058">
    <property type="entry name" value="AB_hydrolase_fold"/>
</dbReference>
<dbReference type="InterPro" id="IPR001563">
    <property type="entry name" value="Peptidase_S10"/>
</dbReference>
<dbReference type="PANTHER" id="PTHR11802:SF457">
    <property type="entry name" value="SERINE CARBOXYPEPTIDASE-LIKE 1-RELATED"/>
    <property type="match status" value="1"/>
</dbReference>
<dbReference type="PANTHER" id="PTHR11802">
    <property type="entry name" value="SERINE PROTEASE FAMILY S10 SERINE CARBOXYPEPTIDASE"/>
    <property type="match status" value="1"/>
</dbReference>
<dbReference type="Pfam" id="PF00450">
    <property type="entry name" value="Peptidase_S10"/>
    <property type="match status" value="1"/>
</dbReference>
<dbReference type="PRINTS" id="PR00724">
    <property type="entry name" value="CRBOXYPTASEC"/>
</dbReference>
<dbReference type="SUPFAM" id="SSF53474">
    <property type="entry name" value="alpha/beta-Hydrolases"/>
    <property type="match status" value="1"/>
</dbReference>
<comment type="function">
    <text evidence="1">Probable carboxypeptidase.</text>
</comment>
<comment type="subcellular location">
    <subcellularLocation>
        <location evidence="4">Secreted</location>
    </subcellularLocation>
</comment>
<comment type="tissue specificity">
    <text evidence="3">Expressed in roots.</text>
</comment>
<comment type="similarity">
    <text evidence="4">Belongs to the peptidase S10 family.</text>
</comment>
<keyword id="KW-0121">Carboxypeptidase</keyword>
<keyword id="KW-1015">Disulfide bond</keyword>
<keyword id="KW-0325">Glycoprotein</keyword>
<keyword id="KW-0378">Hydrolase</keyword>
<keyword id="KW-0645">Protease</keyword>
<keyword id="KW-1185">Reference proteome</keyword>
<keyword id="KW-0964">Secreted</keyword>
<keyword id="KW-0732">Signal</keyword>
<name>SCP3_ARATH</name>
<accession>Q9CAU1</accession>